<keyword id="KW-1003">Cell membrane</keyword>
<keyword id="KW-0472">Membrane</keyword>
<keyword id="KW-0812">Transmembrane</keyword>
<keyword id="KW-1133">Transmembrane helix</keyword>
<keyword id="KW-0813">Transport</keyword>
<comment type="subcellular location">
    <subcellularLocation>
        <location evidence="2">Cell membrane</location>
        <topology evidence="2">Multi-pass membrane protein</topology>
    </subcellularLocation>
</comment>
<comment type="similarity">
    <text evidence="2">Belongs to the AzlC family.</text>
</comment>
<accession>Q9ZJQ3</accession>
<name>YD31_HELPJ</name>
<protein>
    <recommendedName>
        <fullName>Uncharacterized membrane protein jhp_1251</fullName>
    </recommendedName>
</protein>
<proteinExistence type="inferred from homology"/>
<evidence type="ECO:0000255" key="1"/>
<evidence type="ECO:0000305" key="2"/>
<reference key="1">
    <citation type="journal article" date="1999" name="Nature">
        <title>Genomic sequence comparison of two unrelated isolates of the human gastric pathogen Helicobacter pylori.</title>
        <authorList>
            <person name="Alm R.A."/>
            <person name="Ling L.-S.L."/>
            <person name="Moir D.T."/>
            <person name="King B.L."/>
            <person name="Brown E.D."/>
            <person name="Doig P.C."/>
            <person name="Smith D.R."/>
            <person name="Noonan B."/>
            <person name="Guild B.C."/>
            <person name="deJonge B.L."/>
            <person name="Carmel G."/>
            <person name="Tummino P.J."/>
            <person name="Caruso A."/>
            <person name="Uria-Nickelsen M."/>
            <person name="Mills D.M."/>
            <person name="Ives C."/>
            <person name="Gibson R."/>
            <person name="Merberg D."/>
            <person name="Mills S.D."/>
            <person name="Jiang Q."/>
            <person name="Taylor D.E."/>
            <person name="Vovis G.F."/>
            <person name="Trust T.J."/>
        </authorList>
    </citation>
    <scope>NUCLEOTIDE SEQUENCE [LARGE SCALE GENOMIC DNA]</scope>
    <source>
        <strain>J99 / ATCC 700824</strain>
    </source>
</reference>
<sequence>MHDFLKAFKDAFPHTISIFLGYLLMGMTFGMLLAQQGYDYKVALFMSLFIYAGAIQFVAITLLSAQASLMNVVIVSLLVNARQTCYALSMLDRFKNTKWRLPYLAHALTDETFALLNLYAPKKGVNETDFMFSISLLNHSYWIFGSLVGSLVGSHFSFDTQGMEFVMTAIFIVLFMEQYKRNTNHKNAWLGIAIAVVCLALFGTEYFLLIALVLMVLALILFRKQLEC</sequence>
<organism>
    <name type="scientific">Helicobacter pylori (strain J99 / ATCC 700824)</name>
    <name type="common">Campylobacter pylori J99</name>
    <dbReference type="NCBI Taxonomy" id="85963"/>
    <lineage>
        <taxon>Bacteria</taxon>
        <taxon>Pseudomonadati</taxon>
        <taxon>Campylobacterota</taxon>
        <taxon>Epsilonproteobacteria</taxon>
        <taxon>Campylobacterales</taxon>
        <taxon>Helicobacteraceae</taxon>
        <taxon>Helicobacter</taxon>
    </lineage>
</organism>
<feature type="chain" id="PRO_0000111784" description="Uncharacterized membrane protein jhp_1251">
    <location>
        <begin position="1"/>
        <end position="228"/>
    </location>
</feature>
<feature type="transmembrane region" description="Helical" evidence="1">
    <location>
        <begin position="14"/>
        <end position="34"/>
    </location>
</feature>
<feature type="transmembrane region" description="Helical" evidence="1">
    <location>
        <begin position="42"/>
        <end position="62"/>
    </location>
</feature>
<feature type="transmembrane region" description="Helical" evidence="1">
    <location>
        <begin position="130"/>
        <end position="150"/>
    </location>
</feature>
<feature type="transmembrane region" description="Helical" evidence="1">
    <location>
        <begin position="156"/>
        <end position="176"/>
    </location>
</feature>
<feature type="transmembrane region" description="Helical" evidence="1">
    <location>
        <begin position="192"/>
        <end position="212"/>
    </location>
</feature>
<gene>
    <name type="ordered locus">jhp_1251</name>
</gene>
<dbReference type="EMBL" id="AE001439">
    <property type="protein sequence ID" value="AAD06824.1"/>
    <property type="molecule type" value="Genomic_DNA"/>
</dbReference>
<dbReference type="PIR" id="F71831">
    <property type="entry name" value="F71831"/>
</dbReference>
<dbReference type="RefSeq" id="WP_000543649.1">
    <property type="nucleotide sequence ID" value="NC_000921.1"/>
</dbReference>
<dbReference type="KEGG" id="hpj:jhp_1251"/>
<dbReference type="PATRIC" id="fig|85963.30.peg.1320"/>
<dbReference type="eggNOG" id="COG1296">
    <property type="taxonomic scope" value="Bacteria"/>
</dbReference>
<dbReference type="Proteomes" id="UP000000804">
    <property type="component" value="Chromosome"/>
</dbReference>
<dbReference type="GO" id="GO:0005886">
    <property type="term" value="C:plasma membrane"/>
    <property type="evidence" value="ECO:0007669"/>
    <property type="project" value="UniProtKB-SubCell"/>
</dbReference>
<dbReference type="GO" id="GO:1903785">
    <property type="term" value="P:L-valine transmembrane transport"/>
    <property type="evidence" value="ECO:0007669"/>
    <property type="project" value="TreeGrafter"/>
</dbReference>
<dbReference type="InterPro" id="IPR004471">
    <property type="entry name" value="Brnchd-chn_aa_trnsp_AzlC"/>
</dbReference>
<dbReference type="InterPro" id="IPR011606">
    <property type="entry name" value="Brnchd-chn_aa_trnsp_permease"/>
</dbReference>
<dbReference type="NCBIfam" id="TIGR00346">
    <property type="entry name" value="azlC"/>
    <property type="match status" value="1"/>
</dbReference>
<dbReference type="PANTHER" id="PTHR34979">
    <property type="entry name" value="INNER MEMBRANE PROTEIN YGAZ"/>
    <property type="match status" value="1"/>
</dbReference>
<dbReference type="PANTHER" id="PTHR34979:SF1">
    <property type="entry name" value="INNER MEMBRANE PROTEIN YGAZ"/>
    <property type="match status" value="1"/>
</dbReference>
<dbReference type="Pfam" id="PF03591">
    <property type="entry name" value="AzlC"/>
    <property type="match status" value="1"/>
</dbReference>